<feature type="chain" id="PRO_0000110803" description="Orotate phosphoribosyltransferase">
    <location>
        <begin position="1"/>
        <end position="219"/>
    </location>
</feature>
<feature type="binding site" description="in other chain" evidence="1">
    <location>
        <position position="26"/>
    </location>
    <ligand>
        <name>5-phospho-alpha-D-ribose 1-diphosphate</name>
        <dbReference type="ChEBI" id="CHEBI:58017"/>
        <note>ligand shared between dimeric partners</note>
    </ligand>
</feature>
<feature type="binding site" evidence="1">
    <location>
        <begin position="34"/>
        <end position="35"/>
    </location>
    <ligand>
        <name>orotate</name>
        <dbReference type="ChEBI" id="CHEBI:30839"/>
    </ligand>
</feature>
<feature type="binding site" description="in other chain" evidence="1">
    <location>
        <begin position="72"/>
        <end position="73"/>
    </location>
    <ligand>
        <name>5-phospho-alpha-D-ribose 1-diphosphate</name>
        <dbReference type="ChEBI" id="CHEBI:58017"/>
        <note>ligand shared between dimeric partners</note>
    </ligand>
</feature>
<feature type="binding site" evidence="1">
    <location>
        <position position="102"/>
    </location>
    <ligand>
        <name>5-phospho-alpha-D-ribose 1-diphosphate</name>
        <dbReference type="ChEBI" id="CHEBI:58017"/>
        <note>ligand shared between dimeric partners</note>
    </ligand>
</feature>
<feature type="binding site" description="in other chain" evidence="1">
    <location>
        <position position="103"/>
    </location>
    <ligand>
        <name>5-phospho-alpha-D-ribose 1-diphosphate</name>
        <dbReference type="ChEBI" id="CHEBI:58017"/>
        <note>ligand shared between dimeric partners</note>
    </ligand>
</feature>
<feature type="binding site" evidence="1">
    <location>
        <position position="106"/>
    </location>
    <ligand>
        <name>5-phospho-alpha-D-ribose 1-diphosphate</name>
        <dbReference type="ChEBI" id="CHEBI:58017"/>
        <note>ligand shared between dimeric partners</note>
    </ligand>
</feature>
<feature type="binding site" evidence="1">
    <location>
        <position position="108"/>
    </location>
    <ligand>
        <name>5-phospho-alpha-D-ribose 1-diphosphate</name>
        <dbReference type="ChEBI" id="CHEBI:58017"/>
        <note>ligand shared between dimeric partners</note>
    </ligand>
</feature>
<feature type="binding site" description="in other chain" evidence="1">
    <location>
        <begin position="128"/>
        <end position="136"/>
    </location>
    <ligand>
        <name>5-phospho-alpha-D-ribose 1-diphosphate</name>
        <dbReference type="ChEBI" id="CHEBI:58017"/>
        <note>ligand shared between dimeric partners</note>
    </ligand>
</feature>
<feature type="binding site" evidence="1">
    <location>
        <position position="132"/>
    </location>
    <ligand>
        <name>orotate</name>
        <dbReference type="ChEBI" id="CHEBI:30839"/>
    </ligand>
</feature>
<feature type="binding site" evidence="1">
    <location>
        <position position="160"/>
    </location>
    <ligand>
        <name>orotate</name>
        <dbReference type="ChEBI" id="CHEBI:30839"/>
    </ligand>
</feature>
<sequence length="219" mass="23682">MQAYKKDFLDLATKYEALKFGSFTLKSGRTSPYFFNLGLFNTGVALSTVGASFAQVIINSGVEFDVIFGPAYKGIPLAAVTAAKIAELGGEKYATKEYAFNRKEAKDHGEGGNIVGASLKGKKVLIIDDVITAGTAIKEAFSIIDANGATVSAVVIALDRQETTVDSPKSAVQVVSQTYNVPVLNIFNLNDVIQYTDGILTEDEKKKIEQYRDQYSPKE</sequence>
<keyword id="KW-0328">Glycosyltransferase</keyword>
<keyword id="KW-0665">Pyrimidine biosynthesis</keyword>
<keyword id="KW-1185">Reference proteome</keyword>
<keyword id="KW-0808">Transferase</keyword>
<reference key="1">
    <citation type="journal article" date="1995" name="Yeast">
        <title>Cloning and sequencing of the URA5 gene from the yeast Yarrowia lipolytica.</title>
        <authorList>
            <person name="Sanchez M."/>
            <person name="Prado M."/>
            <person name="Iglesias F.J."/>
            <person name="Dominguez A."/>
        </authorList>
    </citation>
    <scope>NUCLEOTIDE SEQUENCE [GENOMIC DNA]</scope>
    <source>
        <strain>ATCC 20460 / W29 / CBS 7504 / IFP29</strain>
    </source>
</reference>
<reference key="2">
    <citation type="submission" date="1998-06" db="EMBL/GenBank/DDBJ databases">
        <title>Gene order in a 10275 bp fragment from Yarrowia lipolytica including YlURA5 and YlSEC65 adyacent genes conserved in four yeast species.</title>
        <authorList>
            <person name="Sanchez M."/>
            <person name="Dominguez A."/>
        </authorList>
    </citation>
    <scope>NUCLEOTIDE SEQUENCE [GENOMIC DNA]</scope>
    <source>
        <strain>ATCC 20460 / W29 / CBS 7504 / IFP29</strain>
    </source>
</reference>
<reference key="3">
    <citation type="journal article" date="2004" name="Nature">
        <title>Genome evolution in yeasts.</title>
        <authorList>
            <person name="Dujon B."/>
            <person name="Sherman D."/>
            <person name="Fischer G."/>
            <person name="Durrens P."/>
            <person name="Casaregola S."/>
            <person name="Lafontaine I."/>
            <person name="de Montigny J."/>
            <person name="Marck C."/>
            <person name="Neuveglise C."/>
            <person name="Talla E."/>
            <person name="Goffard N."/>
            <person name="Frangeul L."/>
            <person name="Aigle M."/>
            <person name="Anthouard V."/>
            <person name="Babour A."/>
            <person name="Barbe V."/>
            <person name="Barnay S."/>
            <person name="Blanchin S."/>
            <person name="Beckerich J.-M."/>
            <person name="Beyne E."/>
            <person name="Bleykasten C."/>
            <person name="Boisrame A."/>
            <person name="Boyer J."/>
            <person name="Cattolico L."/>
            <person name="Confanioleri F."/>
            <person name="de Daruvar A."/>
            <person name="Despons L."/>
            <person name="Fabre E."/>
            <person name="Fairhead C."/>
            <person name="Ferry-Dumazet H."/>
            <person name="Groppi A."/>
            <person name="Hantraye F."/>
            <person name="Hennequin C."/>
            <person name="Jauniaux N."/>
            <person name="Joyet P."/>
            <person name="Kachouri R."/>
            <person name="Kerrest A."/>
            <person name="Koszul R."/>
            <person name="Lemaire M."/>
            <person name="Lesur I."/>
            <person name="Ma L."/>
            <person name="Muller H."/>
            <person name="Nicaud J.-M."/>
            <person name="Nikolski M."/>
            <person name="Oztas S."/>
            <person name="Ozier-Kalogeropoulos O."/>
            <person name="Pellenz S."/>
            <person name="Potier S."/>
            <person name="Richard G.-F."/>
            <person name="Straub M.-L."/>
            <person name="Suleau A."/>
            <person name="Swennen D."/>
            <person name="Tekaia F."/>
            <person name="Wesolowski-Louvel M."/>
            <person name="Westhof E."/>
            <person name="Wirth B."/>
            <person name="Zeniou-Meyer M."/>
            <person name="Zivanovic Y."/>
            <person name="Bolotin-Fukuhara M."/>
            <person name="Thierry A."/>
            <person name="Bouchier C."/>
            <person name="Caudron B."/>
            <person name="Scarpelli C."/>
            <person name="Gaillardin C."/>
            <person name="Weissenbach J."/>
            <person name="Wincker P."/>
            <person name="Souciet J.-L."/>
        </authorList>
    </citation>
    <scope>NUCLEOTIDE SEQUENCE [LARGE SCALE GENOMIC DNA]</scope>
    <source>
        <strain>CLIB 122 / E 150</strain>
    </source>
</reference>
<accession>P41923</accession>
<gene>
    <name type="primary">URA5</name>
    <name type="ordered locus">YALI0F21527g</name>
</gene>
<comment type="function">
    <text evidence="1">Catalyzes the transfer of a ribosyl phosphate group from 5-phosphoribose 1-diphosphate to orotate, leading to the formation of orotidine monophosphate (OMP).</text>
</comment>
<comment type="catalytic activity">
    <reaction>
        <text>orotidine 5'-phosphate + diphosphate = orotate + 5-phospho-alpha-D-ribose 1-diphosphate</text>
        <dbReference type="Rhea" id="RHEA:10380"/>
        <dbReference type="ChEBI" id="CHEBI:30839"/>
        <dbReference type="ChEBI" id="CHEBI:33019"/>
        <dbReference type="ChEBI" id="CHEBI:57538"/>
        <dbReference type="ChEBI" id="CHEBI:58017"/>
        <dbReference type="EC" id="2.4.2.10"/>
    </reaction>
</comment>
<comment type="pathway">
    <text>Pyrimidine metabolism; UMP biosynthesis via de novo pathway; UMP from orotate: step 1/2.</text>
</comment>
<comment type="subunit">
    <text evidence="1">Homodimer.</text>
</comment>
<comment type="similarity">
    <text evidence="2">Belongs to the purine/pyrimidine phosphoribosyltransferase family. PyrE subfamily.</text>
</comment>
<dbReference type="EC" id="2.4.2.10"/>
<dbReference type="EMBL" id="Z22571">
    <property type="protein sequence ID" value="CAA80294.1"/>
    <property type="molecule type" value="Genomic_DNA"/>
</dbReference>
<dbReference type="EMBL" id="AJ006754">
    <property type="protein sequence ID" value="CAB55334.1"/>
    <property type="molecule type" value="Genomic_DNA"/>
</dbReference>
<dbReference type="EMBL" id="CR382132">
    <property type="protein sequence ID" value="CAG78523.1"/>
    <property type="molecule type" value="Genomic_DNA"/>
</dbReference>
<dbReference type="PIR" id="S55840">
    <property type="entry name" value="S55840"/>
</dbReference>
<dbReference type="RefSeq" id="XP_505712.1">
    <property type="nucleotide sequence ID" value="XM_505712.1"/>
</dbReference>
<dbReference type="SMR" id="P41923"/>
<dbReference type="FunCoup" id="P41923">
    <property type="interactions" value="220"/>
</dbReference>
<dbReference type="STRING" id="284591.P41923"/>
<dbReference type="EnsemblFungi" id="CAG78523">
    <property type="protein sequence ID" value="CAG78523"/>
    <property type="gene ID" value="YALI0_F21527g"/>
</dbReference>
<dbReference type="KEGG" id="yli:2907928"/>
<dbReference type="VEuPathDB" id="FungiDB:YALI0_F21527g"/>
<dbReference type="HOGENOM" id="CLU_074878_0_1_1"/>
<dbReference type="InParanoid" id="P41923"/>
<dbReference type="OMA" id="SPFFMNA"/>
<dbReference type="OrthoDB" id="78240at4891"/>
<dbReference type="UniPathway" id="UPA00070">
    <property type="reaction ID" value="UER00119"/>
</dbReference>
<dbReference type="Proteomes" id="UP000001300">
    <property type="component" value="Chromosome F"/>
</dbReference>
<dbReference type="GO" id="GO:0005737">
    <property type="term" value="C:cytoplasm"/>
    <property type="evidence" value="ECO:0000318"/>
    <property type="project" value="GO_Central"/>
</dbReference>
<dbReference type="GO" id="GO:0004588">
    <property type="term" value="F:orotate phosphoribosyltransferase activity"/>
    <property type="evidence" value="ECO:0000318"/>
    <property type="project" value="GO_Central"/>
</dbReference>
<dbReference type="GO" id="GO:0006207">
    <property type="term" value="P:'de novo' pyrimidine nucleobase biosynthetic process"/>
    <property type="evidence" value="ECO:0000318"/>
    <property type="project" value="GO_Central"/>
</dbReference>
<dbReference type="GO" id="GO:0044205">
    <property type="term" value="P:'de novo' UMP biosynthetic process"/>
    <property type="evidence" value="ECO:0007669"/>
    <property type="project" value="UniProtKB-UniPathway"/>
</dbReference>
<dbReference type="GO" id="GO:0006221">
    <property type="term" value="P:pyrimidine nucleotide biosynthetic process"/>
    <property type="evidence" value="ECO:0000318"/>
    <property type="project" value="GO_Central"/>
</dbReference>
<dbReference type="GO" id="GO:0046132">
    <property type="term" value="P:pyrimidine ribonucleoside biosynthetic process"/>
    <property type="evidence" value="ECO:0000318"/>
    <property type="project" value="GO_Central"/>
</dbReference>
<dbReference type="CDD" id="cd06223">
    <property type="entry name" value="PRTases_typeI"/>
    <property type="match status" value="1"/>
</dbReference>
<dbReference type="FunFam" id="3.40.50.2020:FF:000008">
    <property type="entry name" value="Orotate phosphoribosyltransferase"/>
    <property type="match status" value="1"/>
</dbReference>
<dbReference type="Gene3D" id="3.40.50.2020">
    <property type="match status" value="1"/>
</dbReference>
<dbReference type="HAMAP" id="MF_01208">
    <property type="entry name" value="PyrE"/>
    <property type="match status" value="1"/>
</dbReference>
<dbReference type="InterPro" id="IPR023031">
    <property type="entry name" value="OPRT"/>
</dbReference>
<dbReference type="InterPro" id="IPR004467">
    <property type="entry name" value="Or_phspho_trans_dom"/>
</dbReference>
<dbReference type="InterPro" id="IPR000836">
    <property type="entry name" value="PRibTrfase_dom"/>
</dbReference>
<dbReference type="InterPro" id="IPR029057">
    <property type="entry name" value="PRTase-like"/>
</dbReference>
<dbReference type="NCBIfam" id="TIGR00336">
    <property type="entry name" value="pyrE"/>
    <property type="match status" value="1"/>
</dbReference>
<dbReference type="PANTHER" id="PTHR46683">
    <property type="entry name" value="OROTATE PHOSPHORIBOSYLTRANSFERASE 1-RELATED"/>
    <property type="match status" value="1"/>
</dbReference>
<dbReference type="PANTHER" id="PTHR46683:SF1">
    <property type="entry name" value="OROTATE PHOSPHORIBOSYLTRANSFERASE 1-RELATED"/>
    <property type="match status" value="1"/>
</dbReference>
<dbReference type="Pfam" id="PF00156">
    <property type="entry name" value="Pribosyltran"/>
    <property type="match status" value="1"/>
</dbReference>
<dbReference type="SUPFAM" id="SSF53271">
    <property type="entry name" value="PRTase-like"/>
    <property type="match status" value="1"/>
</dbReference>
<dbReference type="PROSITE" id="PS00103">
    <property type="entry name" value="PUR_PYR_PR_TRANSFER"/>
    <property type="match status" value="1"/>
</dbReference>
<name>PYRE_YARLI</name>
<organism>
    <name type="scientific">Yarrowia lipolytica (strain CLIB 122 / E 150)</name>
    <name type="common">Yeast</name>
    <name type="synonym">Candida lipolytica</name>
    <dbReference type="NCBI Taxonomy" id="284591"/>
    <lineage>
        <taxon>Eukaryota</taxon>
        <taxon>Fungi</taxon>
        <taxon>Dikarya</taxon>
        <taxon>Ascomycota</taxon>
        <taxon>Saccharomycotina</taxon>
        <taxon>Dipodascomycetes</taxon>
        <taxon>Dipodascales</taxon>
        <taxon>Dipodascales incertae sedis</taxon>
        <taxon>Yarrowia</taxon>
    </lineage>
</organism>
<evidence type="ECO:0000250" key="1"/>
<evidence type="ECO:0000305" key="2"/>
<protein>
    <recommendedName>
        <fullName>Orotate phosphoribosyltransferase</fullName>
        <shortName>OPRT</shortName>
        <shortName>OPRTase</shortName>
        <ecNumber>2.4.2.10</ecNumber>
    </recommendedName>
</protein>
<proteinExistence type="inferred from homology"/>